<reference key="1">
    <citation type="journal article" date="2003" name="Nature">
        <title>Genome sequence of Bacillus cereus and comparative analysis with Bacillus anthracis.</title>
        <authorList>
            <person name="Ivanova N."/>
            <person name="Sorokin A."/>
            <person name="Anderson I."/>
            <person name="Galleron N."/>
            <person name="Candelon B."/>
            <person name="Kapatral V."/>
            <person name="Bhattacharyya A."/>
            <person name="Reznik G."/>
            <person name="Mikhailova N."/>
            <person name="Lapidus A."/>
            <person name="Chu L."/>
            <person name="Mazur M."/>
            <person name="Goltsman E."/>
            <person name="Larsen N."/>
            <person name="D'Souza M."/>
            <person name="Walunas T."/>
            <person name="Grechkin Y."/>
            <person name="Pusch G."/>
            <person name="Haselkorn R."/>
            <person name="Fonstein M."/>
            <person name="Ehrlich S.D."/>
            <person name="Overbeek R."/>
            <person name="Kyrpides N.C."/>
        </authorList>
    </citation>
    <scope>NUCLEOTIDE SEQUENCE [LARGE SCALE GENOMIC DNA]</scope>
    <source>
        <strain>ATCC 14579 / DSM 31 / CCUG 7414 / JCM 2152 / NBRC 15305 / NCIMB 9373 / NCTC 2599 / NRRL B-3711</strain>
    </source>
</reference>
<accession>Q81DH0</accession>
<name>ANMK_BACCR</name>
<dbReference type="EC" id="2.7.1.170" evidence="1"/>
<dbReference type="EMBL" id="AE016877">
    <property type="protein sequence ID" value="AAP09359.1"/>
    <property type="status" value="ALT_INIT"/>
    <property type="molecule type" value="Genomic_DNA"/>
</dbReference>
<dbReference type="RefSeq" id="NP_832158.1">
    <property type="nucleotide sequence ID" value="NC_004722.1"/>
</dbReference>
<dbReference type="RefSeq" id="WP_000274964.1">
    <property type="nucleotide sequence ID" value="NC_004722.1"/>
</dbReference>
<dbReference type="SMR" id="Q81DH0"/>
<dbReference type="STRING" id="226900.BC_2396"/>
<dbReference type="KEGG" id="bce:BC2396"/>
<dbReference type="PATRIC" id="fig|226900.8.peg.2424"/>
<dbReference type="HOGENOM" id="CLU_038782_1_0_9"/>
<dbReference type="OrthoDB" id="9763949at2"/>
<dbReference type="UniPathway" id="UPA00343"/>
<dbReference type="UniPathway" id="UPA00544"/>
<dbReference type="Proteomes" id="UP000001417">
    <property type="component" value="Chromosome"/>
</dbReference>
<dbReference type="GO" id="GO:0005524">
    <property type="term" value="F:ATP binding"/>
    <property type="evidence" value="ECO:0007669"/>
    <property type="project" value="UniProtKB-UniRule"/>
</dbReference>
<dbReference type="GO" id="GO:0016301">
    <property type="term" value="F:kinase activity"/>
    <property type="evidence" value="ECO:0000318"/>
    <property type="project" value="GO_Central"/>
</dbReference>
<dbReference type="GO" id="GO:0016773">
    <property type="term" value="F:phosphotransferase activity, alcohol group as acceptor"/>
    <property type="evidence" value="ECO:0007669"/>
    <property type="project" value="UniProtKB-UniRule"/>
</dbReference>
<dbReference type="GO" id="GO:0097175">
    <property type="term" value="P:1,6-anhydro-N-acetyl-beta-muramic acid catabolic process"/>
    <property type="evidence" value="ECO:0007669"/>
    <property type="project" value="UniProtKB-UniRule"/>
</dbReference>
<dbReference type="GO" id="GO:0006040">
    <property type="term" value="P:amino sugar metabolic process"/>
    <property type="evidence" value="ECO:0007669"/>
    <property type="project" value="InterPro"/>
</dbReference>
<dbReference type="GO" id="GO:0009254">
    <property type="term" value="P:peptidoglycan turnover"/>
    <property type="evidence" value="ECO:0007669"/>
    <property type="project" value="UniProtKB-UniRule"/>
</dbReference>
<dbReference type="CDD" id="cd24050">
    <property type="entry name" value="ASKHA_NBD_ANMK"/>
    <property type="match status" value="1"/>
</dbReference>
<dbReference type="Gene3D" id="3.30.420.40">
    <property type="match status" value="2"/>
</dbReference>
<dbReference type="HAMAP" id="MF_01270">
    <property type="entry name" value="AnhMurNAc_kinase"/>
    <property type="match status" value="1"/>
</dbReference>
<dbReference type="InterPro" id="IPR005338">
    <property type="entry name" value="Anhydro_N_Ac-Mur_kinase"/>
</dbReference>
<dbReference type="InterPro" id="IPR043129">
    <property type="entry name" value="ATPase_NBD"/>
</dbReference>
<dbReference type="NCBIfam" id="NF007142">
    <property type="entry name" value="PRK09585.2-1"/>
    <property type="match status" value="1"/>
</dbReference>
<dbReference type="NCBIfam" id="NF007148">
    <property type="entry name" value="PRK09585.3-2"/>
    <property type="match status" value="1"/>
</dbReference>
<dbReference type="PANTHER" id="PTHR30605">
    <property type="entry name" value="ANHYDRO-N-ACETYLMURAMIC ACID KINASE"/>
    <property type="match status" value="1"/>
</dbReference>
<dbReference type="PANTHER" id="PTHR30605:SF0">
    <property type="entry name" value="ANHYDRO-N-ACETYLMURAMIC ACID KINASE"/>
    <property type="match status" value="1"/>
</dbReference>
<dbReference type="Pfam" id="PF03702">
    <property type="entry name" value="AnmK"/>
    <property type="match status" value="1"/>
</dbReference>
<dbReference type="SUPFAM" id="SSF53067">
    <property type="entry name" value="Actin-like ATPase domain"/>
    <property type="match status" value="1"/>
</dbReference>
<keyword id="KW-0067">ATP-binding</keyword>
<keyword id="KW-0119">Carbohydrate metabolism</keyword>
<keyword id="KW-0418">Kinase</keyword>
<keyword id="KW-0547">Nucleotide-binding</keyword>
<keyword id="KW-1185">Reference proteome</keyword>
<keyword id="KW-0808">Transferase</keyword>
<sequence length="390" mass="42878">MYIAGVMSGTSLDGIDVALVHIEGSGVDSKIELIHFTTVPFCNDMKNEIQQALSIETSNVQLICSLNFKLGLCFANAVKEVCKEANFPLRQLDLIGSHGQTIYHQPKQEGNIISSTLQIGEPAVIAYETNTTVISNFRTMDMAAGGQGAPLVPYSEIILYRHQTKNRLLQNIGGIGNVTVVPSKRSKESVIAFDTGPGNMVIDEVCQRLFHVPYDQNGWIAKQGVVVDEILTYCMNHPFLNMKPPKSTGREQFGEAFVTELLNRFKKHSKENILATVTMFTACSIVHHYKAFILPYYEIDEVILGGGGSYNNTLVEMLRNGLREEKCSICIQEDIGHSSAAKEAIAFAILANETYHRNPSNVLSATGAKNSVILGNITFPPYADENEANI</sequence>
<gene>
    <name evidence="1" type="primary">anmK</name>
    <name type="ordered locus">BC_2396</name>
</gene>
<evidence type="ECO:0000255" key="1">
    <source>
        <dbReference type="HAMAP-Rule" id="MF_01270"/>
    </source>
</evidence>
<evidence type="ECO:0000305" key="2"/>
<feature type="chain" id="PRO_0000249972" description="Anhydro-N-acetylmuramic acid kinase">
    <location>
        <begin position="1"/>
        <end position="390"/>
    </location>
</feature>
<feature type="binding site" evidence="1">
    <location>
        <begin position="9"/>
        <end position="16"/>
    </location>
    <ligand>
        <name>ATP</name>
        <dbReference type="ChEBI" id="CHEBI:30616"/>
    </ligand>
</feature>
<protein>
    <recommendedName>
        <fullName evidence="1">Anhydro-N-acetylmuramic acid kinase</fullName>
        <ecNumber evidence="1">2.7.1.170</ecNumber>
    </recommendedName>
    <alternativeName>
        <fullName evidence="1">AnhMurNAc kinase</fullName>
    </alternativeName>
</protein>
<proteinExistence type="inferred from homology"/>
<comment type="function">
    <text evidence="1">Catalyzes the specific phosphorylation of 1,6-anhydro-N-acetylmuramic acid (anhMurNAc) with the simultaneous cleavage of the 1,6-anhydro ring, generating MurNAc-6-P. Is required for the utilization of anhMurNAc either imported from the medium or derived from its own cell wall murein, and thus plays a role in cell wall recycling.</text>
</comment>
<comment type="catalytic activity">
    <reaction evidence="1">
        <text>1,6-anhydro-N-acetyl-beta-muramate + ATP + H2O = N-acetyl-D-muramate 6-phosphate + ADP + H(+)</text>
        <dbReference type="Rhea" id="RHEA:24952"/>
        <dbReference type="ChEBI" id="CHEBI:15377"/>
        <dbReference type="ChEBI" id="CHEBI:15378"/>
        <dbReference type="ChEBI" id="CHEBI:30616"/>
        <dbReference type="ChEBI" id="CHEBI:58690"/>
        <dbReference type="ChEBI" id="CHEBI:58722"/>
        <dbReference type="ChEBI" id="CHEBI:456216"/>
        <dbReference type="EC" id="2.7.1.170"/>
    </reaction>
</comment>
<comment type="pathway">
    <text evidence="1">Amino-sugar metabolism; 1,6-anhydro-N-acetylmuramate degradation.</text>
</comment>
<comment type="pathway">
    <text evidence="1">Cell wall biogenesis; peptidoglycan recycling.</text>
</comment>
<comment type="similarity">
    <text evidence="1">Belongs to the anhydro-N-acetylmuramic acid kinase family.</text>
</comment>
<comment type="sequence caution" evidence="2">
    <conflict type="erroneous initiation">
        <sequence resource="EMBL-CDS" id="AAP09359"/>
    </conflict>
</comment>
<organism>
    <name type="scientific">Bacillus cereus (strain ATCC 14579 / DSM 31 / CCUG 7414 / JCM 2152 / NBRC 15305 / NCIMB 9373 / NCTC 2599 / NRRL B-3711)</name>
    <dbReference type="NCBI Taxonomy" id="226900"/>
    <lineage>
        <taxon>Bacteria</taxon>
        <taxon>Bacillati</taxon>
        <taxon>Bacillota</taxon>
        <taxon>Bacilli</taxon>
        <taxon>Bacillales</taxon>
        <taxon>Bacillaceae</taxon>
        <taxon>Bacillus</taxon>
        <taxon>Bacillus cereus group</taxon>
    </lineage>
</organism>